<keyword id="KW-0210">Decarboxylase</keyword>
<keyword id="KW-0456">Lyase</keyword>
<keyword id="KW-0460">Magnesium</keyword>
<keyword id="KW-0479">Metal-binding</keyword>
<sequence>MHRASHHELRAMFRALLDSSRCYHTASVFDPMSARIAADLGFECGILGGSVASLQVLAAPDFALITLSEFVEQATRIGRVARLPVIADADHGYGNALNVMRTVVELERAGIAALTIEDTLLPAQFGRKSTDLICVEEGVGKIRAALEARVDPALTIIARTNAELIDVDAVIQRTLAYQEAGADGICLVGVRDFAHLEAIAEHLHIPLMLVTYGNPQLRDDARLARLGVRVVVNGHAAYFAAIKATYDCLREERGAVASDLTASELSKKYTFPEEYQAWARDYMEVKE</sequence>
<accession>Q02FE6</accession>
<name>OADC_PSEAB</name>
<dbReference type="EC" id="4.1.1.112" evidence="1"/>
<dbReference type="EMBL" id="CP000438">
    <property type="protein sequence ID" value="ABJ14257.1"/>
    <property type="molecule type" value="Genomic_DNA"/>
</dbReference>
<dbReference type="RefSeq" id="WP_003121125.1">
    <property type="nucleotide sequence ID" value="NZ_CP034244.1"/>
</dbReference>
<dbReference type="SMR" id="Q02FE6"/>
<dbReference type="KEGG" id="pau:PA14_64440"/>
<dbReference type="PseudoCAP" id="PA14_64440"/>
<dbReference type="HOGENOM" id="CLU_027389_3_2_6"/>
<dbReference type="BioCyc" id="PAER208963:G1G74-5444-MONOMER"/>
<dbReference type="Proteomes" id="UP000000653">
    <property type="component" value="Chromosome"/>
</dbReference>
<dbReference type="GO" id="GO:0000287">
    <property type="term" value="F:magnesium ion binding"/>
    <property type="evidence" value="ECO:0007669"/>
    <property type="project" value="UniProtKB-UniRule"/>
</dbReference>
<dbReference type="GO" id="GO:0046421">
    <property type="term" value="F:methylisocitrate lyase activity"/>
    <property type="evidence" value="ECO:0007669"/>
    <property type="project" value="TreeGrafter"/>
</dbReference>
<dbReference type="GO" id="GO:0008948">
    <property type="term" value="F:oxaloacetate decarboxylase activity"/>
    <property type="evidence" value="ECO:0007669"/>
    <property type="project" value="UniProtKB-UniRule"/>
</dbReference>
<dbReference type="GO" id="GO:0006107">
    <property type="term" value="P:oxaloacetate metabolic process"/>
    <property type="evidence" value="ECO:0007669"/>
    <property type="project" value="UniProtKB-UniRule"/>
</dbReference>
<dbReference type="GO" id="GO:0019629">
    <property type="term" value="P:propionate catabolic process, 2-methylcitrate cycle"/>
    <property type="evidence" value="ECO:0007669"/>
    <property type="project" value="TreeGrafter"/>
</dbReference>
<dbReference type="GO" id="GO:0042866">
    <property type="term" value="P:pyruvate biosynthetic process"/>
    <property type="evidence" value="ECO:0007669"/>
    <property type="project" value="UniProtKB-UniRule"/>
</dbReference>
<dbReference type="CDD" id="cd00377">
    <property type="entry name" value="ICL_PEPM"/>
    <property type="match status" value="1"/>
</dbReference>
<dbReference type="FunFam" id="3.20.20.60:FF:000015">
    <property type="entry name" value="Oxaloacetate decarboxylase"/>
    <property type="match status" value="1"/>
</dbReference>
<dbReference type="Gene3D" id="3.20.20.60">
    <property type="entry name" value="Phosphoenolpyruvate-binding domains"/>
    <property type="match status" value="1"/>
</dbReference>
<dbReference type="HAMAP" id="MF_01299">
    <property type="entry name" value="OadC"/>
    <property type="match status" value="1"/>
</dbReference>
<dbReference type="InterPro" id="IPR039556">
    <property type="entry name" value="ICL/PEPM"/>
</dbReference>
<dbReference type="InterPro" id="IPR023687">
    <property type="entry name" value="Oxaloacetate_deCOase_bac"/>
</dbReference>
<dbReference type="InterPro" id="IPR015813">
    <property type="entry name" value="Pyrv/PenolPyrv_kinase-like_dom"/>
</dbReference>
<dbReference type="InterPro" id="IPR040442">
    <property type="entry name" value="Pyrv_kinase-like_dom_sf"/>
</dbReference>
<dbReference type="PANTHER" id="PTHR42905:SF3">
    <property type="entry name" value="OXALOACETATE DECARBOXYLASE"/>
    <property type="match status" value="1"/>
</dbReference>
<dbReference type="PANTHER" id="PTHR42905">
    <property type="entry name" value="PHOSPHOENOLPYRUVATE CARBOXYLASE"/>
    <property type="match status" value="1"/>
</dbReference>
<dbReference type="Pfam" id="PF13714">
    <property type="entry name" value="PEP_mutase"/>
    <property type="match status" value="1"/>
</dbReference>
<dbReference type="SUPFAM" id="SSF51621">
    <property type="entry name" value="Phosphoenolpyruvate/pyruvate domain"/>
    <property type="match status" value="1"/>
</dbReference>
<gene>
    <name type="ordered locus">PA14_64440</name>
</gene>
<evidence type="ECO:0000255" key="1">
    <source>
        <dbReference type="HAMAP-Rule" id="MF_01299"/>
    </source>
</evidence>
<evidence type="ECO:0000305" key="2"/>
<reference key="1">
    <citation type="journal article" date="2006" name="Genome Biol.">
        <title>Genomic analysis reveals that Pseudomonas aeruginosa virulence is combinatorial.</title>
        <authorList>
            <person name="Lee D.G."/>
            <person name="Urbach J.M."/>
            <person name="Wu G."/>
            <person name="Liberati N.T."/>
            <person name="Feinbaum R.L."/>
            <person name="Miyata S."/>
            <person name="Diggins L.T."/>
            <person name="He J."/>
            <person name="Saucier M."/>
            <person name="Deziel E."/>
            <person name="Friedman L."/>
            <person name="Li L."/>
            <person name="Grills G."/>
            <person name="Montgomery K."/>
            <person name="Kucherlapati R."/>
            <person name="Rahme L.G."/>
            <person name="Ausubel F.M."/>
        </authorList>
    </citation>
    <scope>NUCLEOTIDE SEQUENCE [LARGE SCALE GENOMIC DNA]</scope>
    <source>
        <strain>UCBPP-PA14</strain>
    </source>
</reference>
<protein>
    <recommendedName>
        <fullName evidence="1">Oxaloacetate decarboxylase</fullName>
        <ecNumber evidence="1">4.1.1.112</ecNumber>
    </recommendedName>
</protein>
<comment type="function">
    <text evidence="1">Catalyzes the decarboxylation of oxaloacetate into pyruvate. Seems to play a role in maintaining cellular concentrations of bicarbonate and pyruvate.</text>
</comment>
<comment type="catalytic activity">
    <reaction evidence="1">
        <text>oxaloacetate + H(+) = pyruvate + CO2</text>
        <dbReference type="Rhea" id="RHEA:15641"/>
        <dbReference type="ChEBI" id="CHEBI:15361"/>
        <dbReference type="ChEBI" id="CHEBI:15378"/>
        <dbReference type="ChEBI" id="CHEBI:16452"/>
        <dbReference type="ChEBI" id="CHEBI:16526"/>
        <dbReference type="EC" id="4.1.1.112"/>
    </reaction>
</comment>
<comment type="cofactor">
    <cofactor evidence="1">
        <name>Mg(2+)</name>
        <dbReference type="ChEBI" id="CHEBI:18420"/>
    </cofactor>
    <text evidence="1">Binds 1 Mg(2+) ion per subunit.</text>
</comment>
<comment type="subunit">
    <text evidence="1">Homotetramer; dimer of dimers.</text>
</comment>
<comment type="similarity">
    <text evidence="2">Belongs to the isocitrate lyase/PEP mutase superfamily. Oxaloacetate decarboxylase family.</text>
</comment>
<feature type="chain" id="PRO_0000364060" description="Oxaloacetate decarboxylase">
    <location>
        <begin position="1"/>
        <end position="287"/>
    </location>
</feature>
<feature type="binding site" evidence="1">
    <location>
        <position position="50"/>
    </location>
    <ligand>
        <name>substrate</name>
    </ligand>
</feature>
<feature type="binding site" evidence="1">
    <location>
        <position position="88"/>
    </location>
    <ligand>
        <name>Mg(2+)</name>
        <dbReference type="ChEBI" id="CHEBI:18420"/>
    </ligand>
</feature>
<feature type="binding site" evidence="1">
    <location>
        <position position="159"/>
    </location>
    <ligand>
        <name>substrate</name>
    </ligand>
</feature>
<feature type="binding site" evidence="1">
    <location>
        <position position="235"/>
    </location>
    <ligand>
        <name>substrate</name>
    </ligand>
</feature>
<organism>
    <name type="scientific">Pseudomonas aeruginosa (strain UCBPP-PA14)</name>
    <dbReference type="NCBI Taxonomy" id="208963"/>
    <lineage>
        <taxon>Bacteria</taxon>
        <taxon>Pseudomonadati</taxon>
        <taxon>Pseudomonadota</taxon>
        <taxon>Gammaproteobacteria</taxon>
        <taxon>Pseudomonadales</taxon>
        <taxon>Pseudomonadaceae</taxon>
        <taxon>Pseudomonas</taxon>
    </lineage>
</organism>
<proteinExistence type="inferred from homology"/>